<feature type="chain" id="PRO_0000270914" description="Type III pantothenate kinase">
    <location>
        <begin position="1"/>
        <end position="242"/>
    </location>
</feature>
<feature type="active site" description="Proton acceptor" evidence="1">
    <location>
        <position position="100"/>
    </location>
</feature>
<feature type="binding site" evidence="1">
    <location>
        <begin position="7"/>
        <end position="14"/>
    </location>
    <ligand>
        <name>ATP</name>
        <dbReference type="ChEBI" id="CHEBI:30616"/>
    </ligand>
</feature>
<feature type="binding site" evidence="1">
    <location>
        <position position="91"/>
    </location>
    <ligand>
        <name>substrate</name>
    </ligand>
</feature>
<feature type="binding site" evidence="1">
    <location>
        <begin position="98"/>
        <end position="101"/>
    </location>
    <ligand>
        <name>substrate</name>
    </ligand>
</feature>
<feature type="binding site" evidence="1">
    <location>
        <position position="121"/>
    </location>
    <ligand>
        <name>ATP</name>
        <dbReference type="ChEBI" id="CHEBI:30616"/>
    </ligand>
</feature>
<feature type="binding site" evidence="1">
    <location>
        <position position="171"/>
    </location>
    <ligand>
        <name>substrate</name>
    </ligand>
</feature>
<gene>
    <name evidence="1" type="primary">coaX</name>
    <name type="ordered locus">XF_1795</name>
</gene>
<protein>
    <recommendedName>
        <fullName evidence="1">Type III pantothenate kinase</fullName>
        <ecNumber evidence="1">2.7.1.33</ecNumber>
    </recommendedName>
    <alternativeName>
        <fullName evidence="1">PanK-III</fullName>
    </alternativeName>
    <alternativeName>
        <fullName evidence="1">Pantothenic acid kinase</fullName>
    </alternativeName>
</protein>
<organism>
    <name type="scientific">Xylella fastidiosa (strain 9a5c)</name>
    <dbReference type="NCBI Taxonomy" id="160492"/>
    <lineage>
        <taxon>Bacteria</taxon>
        <taxon>Pseudomonadati</taxon>
        <taxon>Pseudomonadota</taxon>
        <taxon>Gammaproteobacteria</taxon>
        <taxon>Lysobacterales</taxon>
        <taxon>Lysobacteraceae</taxon>
        <taxon>Xylella</taxon>
    </lineage>
</organism>
<name>COAX_XYLFA</name>
<comment type="function">
    <text evidence="1">Catalyzes the phosphorylation of pantothenate (Pan), the first step in CoA biosynthesis.</text>
</comment>
<comment type="catalytic activity">
    <reaction evidence="1">
        <text>(R)-pantothenate + ATP = (R)-4'-phosphopantothenate + ADP + H(+)</text>
        <dbReference type="Rhea" id="RHEA:16373"/>
        <dbReference type="ChEBI" id="CHEBI:10986"/>
        <dbReference type="ChEBI" id="CHEBI:15378"/>
        <dbReference type="ChEBI" id="CHEBI:29032"/>
        <dbReference type="ChEBI" id="CHEBI:30616"/>
        <dbReference type="ChEBI" id="CHEBI:456216"/>
        <dbReference type="EC" id="2.7.1.33"/>
    </reaction>
</comment>
<comment type="cofactor">
    <cofactor evidence="1">
        <name>NH4(+)</name>
        <dbReference type="ChEBI" id="CHEBI:28938"/>
    </cofactor>
    <cofactor evidence="1">
        <name>K(+)</name>
        <dbReference type="ChEBI" id="CHEBI:29103"/>
    </cofactor>
    <text evidence="1">A monovalent cation. Ammonium or potassium.</text>
</comment>
<comment type="pathway">
    <text evidence="1">Cofactor biosynthesis; coenzyme A biosynthesis; CoA from (R)-pantothenate: step 1/5.</text>
</comment>
<comment type="subunit">
    <text evidence="1">Homodimer.</text>
</comment>
<comment type="subcellular location">
    <subcellularLocation>
        <location evidence="1">Cytoplasm</location>
    </subcellularLocation>
</comment>
<comment type="similarity">
    <text evidence="1">Belongs to the type III pantothenate kinase family.</text>
</comment>
<dbReference type="EC" id="2.7.1.33" evidence="1"/>
<dbReference type="EMBL" id="AE003849">
    <property type="protein sequence ID" value="AAF84603.1"/>
    <property type="molecule type" value="Genomic_DNA"/>
</dbReference>
<dbReference type="PIR" id="A82637">
    <property type="entry name" value="A82637"/>
</dbReference>
<dbReference type="RefSeq" id="WP_010894264.1">
    <property type="nucleotide sequence ID" value="NC_002488.3"/>
</dbReference>
<dbReference type="SMR" id="Q9PCI4"/>
<dbReference type="STRING" id="160492.XF_1795"/>
<dbReference type="KEGG" id="xfa:XF_1795"/>
<dbReference type="eggNOG" id="COG1521">
    <property type="taxonomic scope" value="Bacteria"/>
</dbReference>
<dbReference type="HOGENOM" id="CLU_066627_0_0_6"/>
<dbReference type="UniPathway" id="UPA00241">
    <property type="reaction ID" value="UER00352"/>
</dbReference>
<dbReference type="Proteomes" id="UP000000812">
    <property type="component" value="Chromosome"/>
</dbReference>
<dbReference type="GO" id="GO:0005737">
    <property type="term" value="C:cytoplasm"/>
    <property type="evidence" value="ECO:0007669"/>
    <property type="project" value="UniProtKB-SubCell"/>
</dbReference>
<dbReference type="GO" id="GO:0005524">
    <property type="term" value="F:ATP binding"/>
    <property type="evidence" value="ECO:0007669"/>
    <property type="project" value="UniProtKB-UniRule"/>
</dbReference>
<dbReference type="GO" id="GO:0004594">
    <property type="term" value="F:pantothenate kinase activity"/>
    <property type="evidence" value="ECO:0007669"/>
    <property type="project" value="UniProtKB-UniRule"/>
</dbReference>
<dbReference type="GO" id="GO:0015937">
    <property type="term" value="P:coenzyme A biosynthetic process"/>
    <property type="evidence" value="ECO:0007669"/>
    <property type="project" value="UniProtKB-UniRule"/>
</dbReference>
<dbReference type="CDD" id="cd24015">
    <property type="entry name" value="ASKHA_NBD_PanK-III"/>
    <property type="match status" value="1"/>
</dbReference>
<dbReference type="Gene3D" id="3.30.420.40">
    <property type="match status" value="2"/>
</dbReference>
<dbReference type="HAMAP" id="MF_01274">
    <property type="entry name" value="Pantothen_kinase_3"/>
    <property type="match status" value="1"/>
</dbReference>
<dbReference type="InterPro" id="IPR043129">
    <property type="entry name" value="ATPase_NBD"/>
</dbReference>
<dbReference type="InterPro" id="IPR004619">
    <property type="entry name" value="Type_III_PanK"/>
</dbReference>
<dbReference type="NCBIfam" id="TIGR00671">
    <property type="entry name" value="baf"/>
    <property type="match status" value="1"/>
</dbReference>
<dbReference type="NCBIfam" id="NF009864">
    <property type="entry name" value="PRK13327.1"/>
    <property type="match status" value="1"/>
</dbReference>
<dbReference type="PANTHER" id="PTHR34265">
    <property type="entry name" value="TYPE III PANTOTHENATE KINASE"/>
    <property type="match status" value="1"/>
</dbReference>
<dbReference type="PANTHER" id="PTHR34265:SF1">
    <property type="entry name" value="TYPE III PANTOTHENATE KINASE"/>
    <property type="match status" value="1"/>
</dbReference>
<dbReference type="Pfam" id="PF03309">
    <property type="entry name" value="Pan_kinase"/>
    <property type="match status" value="1"/>
</dbReference>
<dbReference type="SUPFAM" id="SSF53067">
    <property type="entry name" value="Actin-like ATPase domain"/>
    <property type="match status" value="2"/>
</dbReference>
<keyword id="KW-0067">ATP-binding</keyword>
<keyword id="KW-0173">Coenzyme A biosynthesis</keyword>
<keyword id="KW-0963">Cytoplasm</keyword>
<keyword id="KW-0418">Kinase</keyword>
<keyword id="KW-0547">Nucleotide-binding</keyword>
<keyword id="KW-0630">Potassium</keyword>
<keyword id="KW-0808">Transferase</keyword>
<reference key="1">
    <citation type="journal article" date="2000" name="Nature">
        <title>The genome sequence of the plant pathogen Xylella fastidiosa.</title>
        <authorList>
            <person name="Simpson A.J.G."/>
            <person name="Reinach F.C."/>
            <person name="Arruda P."/>
            <person name="Abreu F.A."/>
            <person name="Acencio M."/>
            <person name="Alvarenga R."/>
            <person name="Alves L.M.C."/>
            <person name="Araya J.E."/>
            <person name="Baia G.S."/>
            <person name="Baptista C.S."/>
            <person name="Barros M.H."/>
            <person name="Bonaccorsi E.D."/>
            <person name="Bordin S."/>
            <person name="Bove J.M."/>
            <person name="Briones M.R.S."/>
            <person name="Bueno M.R.P."/>
            <person name="Camargo A.A."/>
            <person name="Camargo L.E.A."/>
            <person name="Carraro D.M."/>
            <person name="Carrer H."/>
            <person name="Colauto N.B."/>
            <person name="Colombo C."/>
            <person name="Costa F.F."/>
            <person name="Costa M.C.R."/>
            <person name="Costa-Neto C.M."/>
            <person name="Coutinho L.L."/>
            <person name="Cristofani M."/>
            <person name="Dias-Neto E."/>
            <person name="Docena C."/>
            <person name="El-Dorry H."/>
            <person name="Facincani A.P."/>
            <person name="Ferreira A.J.S."/>
            <person name="Ferreira V.C.A."/>
            <person name="Ferro J.A."/>
            <person name="Fraga J.S."/>
            <person name="Franca S.C."/>
            <person name="Franco M.C."/>
            <person name="Frohme M."/>
            <person name="Furlan L.R."/>
            <person name="Garnier M."/>
            <person name="Goldman G.H."/>
            <person name="Goldman M.H.S."/>
            <person name="Gomes S.L."/>
            <person name="Gruber A."/>
            <person name="Ho P.L."/>
            <person name="Hoheisel J.D."/>
            <person name="Junqueira M.L."/>
            <person name="Kemper E.L."/>
            <person name="Kitajima J.P."/>
            <person name="Krieger J.E."/>
            <person name="Kuramae E.E."/>
            <person name="Laigret F."/>
            <person name="Lambais M.R."/>
            <person name="Leite L.C.C."/>
            <person name="Lemos E.G.M."/>
            <person name="Lemos M.V.F."/>
            <person name="Lopes S.A."/>
            <person name="Lopes C.R."/>
            <person name="Machado J.A."/>
            <person name="Machado M.A."/>
            <person name="Madeira A.M.B.N."/>
            <person name="Madeira H.M.F."/>
            <person name="Marino C.L."/>
            <person name="Marques M.V."/>
            <person name="Martins E.A.L."/>
            <person name="Martins E.M.F."/>
            <person name="Matsukuma A.Y."/>
            <person name="Menck C.F.M."/>
            <person name="Miracca E.C."/>
            <person name="Miyaki C.Y."/>
            <person name="Monteiro-Vitorello C.B."/>
            <person name="Moon D.H."/>
            <person name="Nagai M.A."/>
            <person name="Nascimento A.L.T.O."/>
            <person name="Netto L.E.S."/>
            <person name="Nhani A. Jr."/>
            <person name="Nobrega F.G."/>
            <person name="Nunes L.R."/>
            <person name="Oliveira M.A."/>
            <person name="de Oliveira M.C."/>
            <person name="de Oliveira R.C."/>
            <person name="Palmieri D.A."/>
            <person name="Paris A."/>
            <person name="Peixoto B.R."/>
            <person name="Pereira G.A.G."/>
            <person name="Pereira H.A. Jr."/>
            <person name="Pesquero J.B."/>
            <person name="Quaggio R.B."/>
            <person name="Roberto P.G."/>
            <person name="Rodrigues V."/>
            <person name="de Rosa A.J.M."/>
            <person name="de Rosa V.E. Jr."/>
            <person name="de Sa R.G."/>
            <person name="Santelli R.V."/>
            <person name="Sawasaki H.E."/>
            <person name="da Silva A.C.R."/>
            <person name="da Silva A.M."/>
            <person name="da Silva F.R."/>
            <person name="Silva W.A. Jr."/>
            <person name="da Silveira J.F."/>
            <person name="Silvestri M.L.Z."/>
            <person name="Siqueira W.J."/>
            <person name="de Souza A.A."/>
            <person name="de Souza A.P."/>
            <person name="Terenzi M.F."/>
            <person name="Truffi D."/>
            <person name="Tsai S.M."/>
            <person name="Tsuhako M.H."/>
            <person name="Vallada H."/>
            <person name="Van Sluys M.A."/>
            <person name="Verjovski-Almeida S."/>
            <person name="Vettore A.L."/>
            <person name="Zago M.A."/>
            <person name="Zatz M."/>
            <person name="Meidanis J."/>
            <person name="Setubal J.C."/>
        </authorList>
    </citation>
    <scope>NUCLEOTIDE SEQUENCE [LARGE SCALE GENOMIC DNA]</scope>
    <source>
        <strain>9a5c</strain>
    </source>
</reference>
<sequence>MNDWLFDLGNSRFKCASLREGVIGPVTVLPYLTETMDAFALQELPRGRVAYLASVAAPAITTHVLEVLKIHFEQVQVAATVAACAGVRIAYAHPERFGVDRFLALLGSYGEGNVLVVGVGTALTIDLLAANGCHLGGRISASPTLMRQALHARAEQLPLSGGNYLEFAEDTEDALVSGCNGAAVALIERSLYEAHQRLDQSVRLLLHGGGVASLLPWLGDVVHRPTLVLDGLAIWAAVAANV</sequence>
<proteinExistence type="inferred from homology"/>
<accession>Q9PCI4</accession>
<evidence type="ECO:0000255" key="1">
    <source>
        <dbReference type="HAMAP-Rule" id="MF_01274"/>
    </source>
</evidence>